<evidence type="ECO:0000250" key="1"/>
<evidence type="ECO:0000255" key="2"/>
<evidence type="ECO:0000255" key="3">
    <source>
        <dbReference type="PROSITE-ProRule" id="PRU01258"/>
    </source>
</evidence>
<evidence type="ECO:0000269" key="4">
    <source>
    </source>
</evidence>
<evidence type="ECO:0000269" key="5">
    <source>
    </source>
</evidence>
<evidence type="ECO:0000269" key="6">
    <source>
    </source>
</evidence>
<evidence type="ECO:0000305" key="7"/>
<name>CHITL_CAEEL</name>
<keyword id="KW-0119">Carbohydrate metabolism</keyword>
<keyword id="KW-0146">Chitin degradation</keyword>
<keyword id="KW-1015">Disulfide bond</keyword>
<keyword id="KW-0325">Glycoprotein</keyword>
<keyword id="KW-0326">Glycosidase</keyword>
<keyword id="KW-0378">Hydrolase</keyword>
<keyword id="KW-0624">Polysaccharide degradation</keyword>
<keyword id="KW-1185">Reference proteome</keyword>
<keyword id="KW-0964">Secreted</keyword>
<keyword id="KW-0732">Signal</keyword>
<organism>
    <name type="scientific">Caenorhabditis elegans</name>
    <dbReference type="NCBI Taxonomy" id="6239"/>
    <lineage>
        <taxon>Eukaryota</taxon>
        <taxon>Metazoa</taxon>
        <taxon>Ecdysozoa</taxon>
        <taxon>Nematoda</taxon>
        <taxon>Chromadorea</taxon>
        <taxon>Rhabditida</taxon>
        <taxon>Rhabditina</taxon>
        <taxon>Rhabditomorpha</taxon>
        <taxon>Rhabditoidea</taxon>
        <taxon>Rhabditidae</taxon>
        <taxon>Peloderinae</taxon>
        <taxon>Caenorhabditis</taxon>
    </lineage>
</organism>
<protein>
    <recommendedName>
        <fullName>Chitinase-like protein C25A8.4</fullName>
        <ecNumber>3.2.1.-</ecNumber>
    </recommendedName>
</protein>
<reference key="1">
    <citation type="journal article" date="1998" name="Science">
        <title>Genome sequence of the nematode C. elegans: a platform for investigating biology.</title>
        <authorList>
            <consortium name="The C. elegans sequencing consortium"/>
        </authorList>
    </citation>
    <scope>NUCLEOTIDE SEQUENCE [LARGE SCALE GENOMIC DNA]</scope>
    <source>
        <strain>Bristol N2</strain>
    </source>
</reference>
<reference key="2">
    <citation type="journal article" date="2003" name="Nat. Biotechnol.">
        <title>Lectin affinity capture, isotope-coded tagging and mass spectrometry to identify N-linked glycoproteins.</title>
        <authorList>
            <person name="Kaji H."/>
            <person name="Saito H."/>
            <person name="Yamauchi Y."/>
            <person name="Shinkawa T."/>
            <person name="Taoka M."/>
            <person name="Hirabayashi J."/>
            <person name="Kasai K."/>
            <person name="Takahashi N."/>
            <person name="Isobe T."/>
        </authorList>
    </citation>
    <scope>GLYCOSYLATION [LARGE SCALE ANALYSIS] AT ASN-47</scope>
    <scope>IDENTIFICATION BY MASS SPECTROMETRY</scope>
    <source>
        <strain>Bristol N2</strain>
    </source>
</reference>
<reference key="3">
    <citation type="journal article" date="2005" name="Glycobiology">
        <title>Identification of the hydrophobic glycoproteins of Caenorhabditis elegans.</title>
        <authorList>
            <person name="Fan X."/>
            <person name="She Y.-M."/>
            <person name="Bagshaw R.D."/>
            <person name="Callahan J.W."/>
            <person name="Schachter H."/>
            <person name="Mahuran D.J."/>
        </authorList>
    </citation>
    <scope>GLYCOSYLATION [LARGE SCALE ANALYSIS] AT ASN-47 AND ASN-216</scope>
    <scope>IDENTIFICATION BY MASS SPECTROMETRY</scope>
</reference>
<reference key="4">
    <citation type="journal article" date="2007" name="Mol. Cell. Proteomics">
        <title>Proteomics reveals N-linked glycoprotein diversity in Caenorhabditis elegans and suggests an atypical translocation mechanism for integral membrane proteins.</title>
        <authorList>
            <person name="Kaji H."/>
            <person name="Kamiie J."/>
            <person name="Kawakami H."/>
            <person name="Kido K."/>
            <person name="Yamauchi Y."/>
            <person name="Shinkawa T."/>
            <person name="Taoka M."/>
            <person name="Takahashi N."/>
            <person name="Isobe T."/>
        </authorList>
    </citation>
    <scope>GLYCOSYLATION [LARGE SCALE ANALYSIS] AT ASN-47; ASN-216; ASN-475; ASN-710; ASN-933 AND ASN-1010</scope>
    <scope>IDENTIFICATION BY MASS SPECTROMETRY</scope>
    <source>
        <strain>Bristol N2</strain>
    </source>
</reference>
<comment type="function">
    <text evidence="1">Putative chitinase.</text>
</comment>
<comment type="subcellular location">
    <subcellularLocation>
        <location evidence="7">Secreted</location>
    </subcellularLocation>
</comment>
<comment type="similarity">
    <text evidence="7">Belongs to the glycosyl hydrolase 18 family.</text>
</comment>
<dbReference type="EC" id="3.2.1.-"/>
<dbReference type="EMBL" id="FO080398">
    <property type="protein sequence ID" value="CCD63429.1"/>
    <property type="molecule type" value="Genomic_DNA"/>
</dbReference>
<dbReference type="PIR" id="T29806">
    <property type="entry name" value="T29806"/>
</dbReference>
<dbReference type="RefSeq" id="NP_501082.2">
    <property type="nucleotide sequence ID" value="NM_068681.4"/>
</dbReference>
<dbReference type="SMR" id="Q18143"/>
<dbReference type="BioGRID" id="42584">
    <property type="interactions" value="7"/>
</dbReference>
<dbReference type="FunCoup" id="Q18143">
    <property type="interactions" value="3"/>
</dbReference>
<dbReference type="STRING" id="6239.C25A8.4.1"/>
<dbReference type="CAZy" id="GH18">
    <property type="family name" value="Glycoside Hydrolase Family 18"/>
</dbReference>
<dbReference type="GlyCosmos" id="Q18143">
    <property type="glycosylation" value="10 sites, No reported glycans"/>
</dbReference>
<dbReference type="iPTMnet" id="Q18143"/>
<dbReference type="PaxDb" id="6239-C25A8.4"/>
<dbReference type="PeptideAtlas" id="Q18143"/>
<dbReference type="EnsemblMetazoa" id="C25A8.4.1">
    <property type="protein sequence ID" value="C25A8.4.1"/>
    <property type="gene ID" value="WBGene00016084"/>
</dbReference>
<dbReference type="GeneID" id="177464"/>
<dbReference type="KEGG" id="cel:CELE_C25A8.4"/>
<dbReference type="UCSC" id="C25A8.4">
    <property type="organism name" value="c. elegans"/>
</dbReference>
<dbReference type="AGR" id="WB:WBGene00016084"/>
<dbReference type="CTD" id="177464"/>
<dbReference type="WormBase" id="C25A8.4">
    <property type="protein sequence ID" value="CE32592"/>
    <property type="gene ID" value="WBGene00016084"/>
    <property type="gene designation" value="cht-3"/>
</dbReference>
<dbReference type="eggNOG" id="KOG2806">
    <property type="taxonomic scope" value="Eukaryota"/>
</dbReference>
<dbReference type="HOGENOM" id="CLU_288240_0_0_1"/>
<dbReference type="InParanoid" id="Q18143"/>
<dbReference type="OMA" id="YERMMTL"/>
<dbReference type="OrthoDB" id="73875at2759"/>
<dbReference type="PhylomeDB" id="Q18143"/>
<dbReference type="Reactome" id="R-CEL-6798695">
    <property type="pathway name" value="Neutrophil degranulation"/>
</dbReference>
<dbReference type="PRO" id="PR:Q18143"/>
<dbReference type="Proteomes" id="UP000001940">
    <property type="component" value="Chromosome IV"/>
</dbReference>
<dbReference type="Bgee" id="WBGene00016084">
    <property type="expression patterns" value="Expressed in germ line (C elegans) and 2 other cell types or tissues"/>
</dbReference>
<dbReference type="GO" id="GO:0005576">
    <property type="term" value="C:extracellular region"/>
    <property type="evidence" value="ECO:0000318"/>
    <property type="project" value="GO_Central"/>
</dbReference>
<dbReference type="GO" id="GO:0008061">
    <property type="term" value="F:chitin binding"/>
    <property type="evidence" value="ECO:0007669"/>
    <property type="project" value="InterPro"/>
</dbReference>
<dbReference type="GO" id="GO:0004568">
    <property type="term" value="F:chitinase activity"/>
    <property type="evidence" value="ECO:0000318"/>
    <property type="project" value="GO_Central"/>
</dbReference>
<dbReference type="GO" id="GO:0006032">
    <property type="term" value="P:chitin catabolic process"/>
    <property type="evidence" value="ECO:0000318"/>
    <property type="project" value="GO_Central"/>
</dbReference>
<dbReference type="GO" id="GO:0000272">
    <property type="term" value="P:polysaccharide catabolic process"/>
    <property type="evidence" value="ECO:0007669"/>
    <property type="project" value="UniProtKB-KW"/>
</dbReference>
<dbReference type="Gene3D" id="3.10.50.10">
    <property type="match status" value="1"/>
</dbReference>
<dbReference type="Gene3D" id="3.20.20.80">
    <property type="entry name" value="Glycosidases"/>
    <property type="match status" value="3"/>
</dbReference>
<dbReference type="InterPro" id="IPR011583">
    <property type="entry name" value="Chitinase_II/V-like_cat"/>
</dbReference>
<dbReference type="InterPro" id="IPR029070">
    <property type="entry name" value="Chitinase_insertion_sf"/>
</dbReference>
<dbReference type="InterPro" id="IPR001223">
    <property type="entry name" value="Glyco_hydro18_cat"/>
</dbReference>
<dbReference type="InterPro" id="IPR017853">
    <property type="entry name" value="Glycoside_hydrolase_SF"/>
</dbReference>
<dbReference type="InterPro" id="IPR050314">
    <property type="entry name" value="Glycosyl_Hydrlase_18"/>
</dbReference>
<dbReference type="PANTHER" id="PTHR11177">
    <property type="entry name" value="CHITINASE"/>
    <property type="match status" value="1"/>
</dbReference>
<dbReference type="PANTHER" id="PTHR11177:SF317">
    <property type="entry name" value="CHITINASE 12-RELATED"/>
    <property type="match status" value="1"/>
</dbReference>
<dbReference type="Pfam" id="PF00704">
    <property type="entry name" value="Glyco_hydro_18"/>
    <property type="match status" value="3"/>
</dbReference>
<dbReference type="SMART" id="SM00636">
    <property type="entry name" value="Glyco_18"/>
    <property type="match status" value="1"/>
</dbReference>
<dbReference type="SUPFAM" id="SSF51445">
    <property type="entry name" value="(Trans)glycosidases"/>
    <property type="match status" value="3"/>
</dbReference>
<dbReference type="PROSITE" id="PS51910">
    <property type="entry name" value="GH18_2"/>
    <property type="match status" value="3"/>
</dbReference>
<accession>Q18143</accession>
<feature type="signal peptide" evidence="2">
    <location>
        <begin position="1"/>
        <end position="18"/>
    </location>
</feature>
<feature type="chain" id="PRO_0000248518" description="Chitinase-like protein C25A8.4">
    <location>
        <begin position="19"/>
        <end position="1067"/>
    </location>
</feature>
<feature type="domain" description="GH18 1" evidence="3">
    <location>
        <begin position="26"/>
        <end position="364"/>
    </location>
</feature>
<feature type="domain" description="GH18 2" evidence="3">
    <location>
        <begin position="372"/>
        <end position="727"/>
    </location>
</feature>
<feature type="domain" description="GH18 3" evidence="3">
    <location>
        <begin position="743"/>
        <end position="1067"/>
    </location>
</feature>
<feature type="active site" description="Proton donor" evidence="3">
    <location>
        <position position="855"/>
    </location>
</feature>
<feature type="glycosylation site" description="N-linked (GlcNAc...) asparagine" evidence="4 5 6">
    <location>
        <position position="47"/>
    </location>
</feature>
<feature type="glycosylation site" description="N-linked (GlcNAc...) asparagine" evidence="5 6">
    <location>
        <position position="216"/>
    </location>
</feature>
<feature type="glycosylation site" description="N-linked (GlcNAc...) asparagine" evidence="6">
    <location>
        <position position="475"/>
    </location>
</feature>
<feature type="glycosylation site" description="N-linked (GlcNAc...) asparagine" evidence="2">
    <location>
        <position position="538"/>
    </location>
</feature>
<feature type="glycosylation site" description="N-linked (GlcNAc...) asparagine" evidence="6">
    <location>
        <position position="710"/>
    </location>
</feature>
<feature type="glycosylation site" description="N-linked (GlcNAc...) asparagine" evidence="2">
    <location>
        <position position="797"/>
    </location>
</feature>
<feature type="glycosylation site" description="N-linked (GlcNAc...) asparagine" evidence="2">
    <location>
        <position position="830"/>
    </location>
</feature>
<feature type="glycosylation site" description="N-linked (GlcNAc...) asparagine" evidence="2">
    <location>
        <position position="887"/>
    </location>
</feature>
<feature type="glycosylation site" description="N-linked (GlcNAc...) asparagine" evidence="6">
    <location>
        <position position="933"/>
    </location>
</feature>
<feature type="glycosylation site" description="N-linked (GlcNAc...) asparagine" evidence="6">
    <location>
        <position position="1010"/>
    </location>
</feature>
<feature type="disulfide bond" evidence="3">
    <location>
        <begin position="30"/>
        <end position="51"/>
    </location>
</feature>
<feature type="disulfide bond" evidence="3">
    <location>
        <begin position="376"/>
        <end position="397"/>
    </location>
</feature>
<feature type="disulfide bond" evidence="3">
    <location>
        <begin position="747"/>
        <end position="768"/>
    </location>
</feature>
<gene>
    <name type="primary">cht-3</name>
    <name type="ORF">C25A8.4</name>
</gene>
<proteinExistence type="evidence at protein level"/>
<sequence>MGIKTLIWLSILVVGIYCEISDEDAPVHYCFVNPPPKTRLSPNLLQNITTCTHLVYGSIPIDRDTGYPQYSVSDVESGYDIDNIRTFMRLRKYHPNAKLLMGVVRTKPFEDAATSVKVANGLRSHVKSKRFDGLFVTFNGIHLEYRASTSFLETISKDKKMSLTFGVTGRRVFAFDALRRLQEINDLVEYIYLDMGELPSNEELARVTHINPLFYNGSIPFEETIQGTVEELSKEGILPSRIVVGLTAGGWKFEIKETQDPLKISHGQYAENNGKRVSYQDACRARGAVIYDWQTMNEITVYRQTWMSVNLPTIKAMGEKMKWILGQKFAGIGISHALFDDPRGDCGTDPLPAHRLVMELIRNTIPANPAKCTRLCYLDPEEVEETFPIDNLKSDYCSHIVVPYFALDLSDKMIEEDKAEDLVKKIDDWRSKIVEVAPRLILSVGSKQASTIWQFLLGNDFHRKELAEGLVKAINSTNADGLEISWTSQPMVSDFDKKNLKSFINDIVAADTAKMVEIVVATSQQSAYSDFYDYEHLNKTASLIVLHSHRLHSDSLPFTGHPSPLRATSSMTNQKMSWESLLSHWVEKRVLPSKLVLSLSASTLSMQSLADVRSSAATPFGQSAFVSMLRSKKGDIHSQQEICESLKSGTGVTHWVDGAEVPYLRRYDQMVAYENTRSAHIKAVWASMEGVGGLALHNMHQDDPSAVCDNRTAFPILNALSRAQVCQTCLKQHDFKKCEQHDFVVSCNFELKRSTPVFKTDIVPYERCTEVVVEQATLTLGGNVNFNDVQQEQVVKNLTSLRSKMVKCGMVLSLSCGDSEKYLNSILGDNMTFAIGNVMNIMEKYKFSGVQLDCEKVIRRGNHIYFNTFVKKLAQKFESGKASNGCNRTLSARFSHYTQKPSTYYSVSLLNRLSHIALRMTDKHSVDLPFFFNHTKPEFPSTEKFVNIWKNVGLKPDKLVLELSPFGWQTGKKVGEKKKMTQGVNCVTAGNRAVYEHDYETLTGMTKHENGTINMPMIEDFRYKIGYIQREQLGGIALNVNGDDYTGICGRGSFPILKSVYSSHKCR</sequence>